<sequence length="78" mass="8498">MSEQLKIKAMRAAGVGCVLMLMIIALVVFMLPTGILIDYLTLAGSWVGGGTTFGILMLAALPPLTGAIFYYFWKWVLK</sequence>
<evidence type="ECO:0000255" key="1"/>
<evidence type="ECO:0000305" key="2"/>
<feature type="chain" id="PRO_0000216321" description="Uncharacterized protein PM1237">
    <location>
        <begin position="1"/>
        <end position="78"/>
    </location>
</feature>
<feature type="transmembrane region" description="Helical" evidence="1">
    <location>
        <begin position="13"/>
        <end position="35"/>
    </location>
</feature>
<feature type="transmembrane region" description="Helical" evidence="1">
    <location>
        <begin position="50"/>
        <end position="72"/>
    </location>
</feature>
<dbReference type="EMBL" id="AE004439">
    <property type="protein sequence ID" value="AAK03321.1"/>
    <property type="molecule type" value="Genomic_DNA"/>
</dbReference>
<dbReference type="RefSeq" id="WP_005717662.1">
    <property type="nucleotide sequence ID" value="NC_002663.1"/>
</dbReference>
<dbReference type="STRING" id="272843.PM1237"/>
<dbReference type="EnsemblBacteria" id="AAK03321">
    <property type="protein sequence ID" value="AAK03321"/>
    <property type="gene ID" value="PM1237"/>
</dbReference>
<dbReference type="KEGG" id="pmu:PM1237"/>
<dbReference type="HOGENOM" id="CLU_2617065_0_0_6"/>
<dbReference type="OrthoDB" id="5683878at2"/>
<dbReference type="Proteomes" id="UP000000809">
    <property type="component" value="Chromosome"/>
</dbReference>
<dbReference type="GO" id="GO:0005886">
    <property type="term" value="C:plasma membrane"/>
    <property type="evidence" value="ECO:0007669"/>
    <property type="project" value="UniProtKB-SubCell"/>
</dbReference>
<organism>
    <name type="scientific">Pasteurella multocida (strain Pm70)</name>
    <dbReference type="NCBI Taxonomy" id="272843"/>
    <lineage>
        <taxon>Bacteria</taxon>
        <taxon>Pseudomonadati</taxon>
        <taxon>Pseudomonadota</taxon>
        <taxon>Gammaproteobacteria</taxon>
        <taxon>Pasteurellales</taxon>
        <taxon>Pasteurellaceae</taxon>
        <taxon>Pasteurella</taxon>
    </lineage>
</organism>
<accession>Q9CLJ2</accession>
<proteinExistence type="predicted"/>
<gene>
    <name type="ordered locus">PM1237</name>
</gene>
<comment type="subcellular location">
    <subcellularLocation>
        <location evidence="2">Cell membrane</location>
        <topology evidence="2">Multi-pass membrane protein</topology>
    </subcellularLocation>
</comment>
<name>Y1237_PASMU</name>
<keyword id="KW-1003">Cell membrane</keyword>
<keyword id="KW-0472">Membrane</keyword>
<keyword id="KW-1185">Reference proteome</keyword>
<keyword id="KW-0812">Transmembrane</keyword>
<keyword id="KW-1133">Transmembrane helix</keyword>
<protein>
    <recommendedName>
        <fullName>Uncharacterized protein PM1237</fullName>
    </recommendedName>
</protein>
<reference key="1">
    <citation type="journal article" date="2001" name="Proc. Natl. Acad. Sci. U.S.A.">
        <title>Complete genomic sequence of Pasteurella multocida Pm70.</title>
        <authorList>
            <person name="May B.J."/>
            <person name="Zhang Q."/>
            <person name="Li L.L."/>
            <person name="Paustian M.L."/>
            <person name="Whittam T.S."/>
            <person name="Kapur V."/>
        </authorList>
    </citation>
    <scope>NUCLEOTIDE SEQUENCE [LARGE SCALE GENOMIC DNA]</scope>
    <source>
        <strain>Pm70</strain>
    </source>
</reference>